<proteinExistence type="inferred from homology"/>
<evidence type="ECO:0000255" key="1">
    <source>
        <dbReference type="HAMAP-Rule" id="MF_00456"/>
    </source>
</evidence>
<gene>
    <name evidence="1" type="primary">proB</name>
    <name type="ordered locus">Sama_2516</name>
</gene>
<dbReference type="EC" id="2.7.2.11" evidence="1"/>
<dbReference type="EMBL" id="CP000507">
    <property type="protein sequence ID" value="ABM00719.1"/>
    <property type="molecule type" value="Genomic_DNA"/>
</dbReference>
<dbReference type="RefSeq" id="WP_011760625.1">
    <property type="nucleotide sequence ID" value="NC_008700.1"/>
</dbReference>
<dbReference type="SMR" id="A1S8L2"/>
<dbReference type="STRING" id="326297.Sama_2516"/>
<dbReference type="KEGG" id="saz:Sama_2516"/>
<dbReference type="eggNOG" id="COG0263">
    <property type="taxonomic scope" value="Bacteria"/>
</dbReference>
<dbReference type="HOGENOM" id="CLU_025400_2_0_6"/>
<dbReference type="OrthoDB" id="9804434at2"/>
<dbReference type="UniPathway" id="UPA00098">
    <property type="reaction ID" value="UER00359"/>
</dbReference>
<dbReference type="Proteomes" id="UP000009175">
    <property type="component" value="Chromosome"/>
</dbReference>
<dbReference type="GO" id="GO:0005829">
    <property type="term" value="C:cytosol"/>
    <property type="evidence" value="ECO:0007669"/>
    <property type="project" value="TreeGrafter"/>
</dbReference>
<dbReference type="GO" id="GO:0005524">
    <property type="term" value="F:ATP binding"/>
    <property type="evidence" value="ECO:0007669"/>
    <property type="project" value="UniProtKB-KW"/>
</dbReference>
<dbReference type="GO" id="GO:0004349">
    <property type="term" value="F:glutamate 5-kinase activity"/>
    <property type="evidence" value="ECO:0007669"/>
    <property type="project" value="UniProtKB-UniRule"/>
</dbReference>
<dbReference type="GO" id="GO:0003723">
    <property type="term" value="F:RNA binding"/>
    <property type="evidence" value="ECO:0007669"/>
    <property type="project" value="InterPro"/>
</dbReference>
<dbReference type="GO" id="GO:0055129">
    <property type="term" value="P:L-proline biosynthetic process"/>
    <property type="evidence" value="ECO:0007669"/>
    <property type="project" value="UniProtKB-UniRule"/>
</dbReference>
<dbReference type="CDD" id="cd04242">
    <property type="entry name" value="AAK_G5K_ProB"/>
    <property type="match status" value="1"/>
</dbReference>
<dbReference type="CDD" id="cd21157">
    <property type="entry name" value="PUA_G5K"/>
    <property type="match status" value="1"/>
</dbReference>
<dbReference type="FunFam" id="3.40.1160.10:FF:000006">
    <property type="entry name" value="Glutamate 5-kinase"/>
    <property type="match status" value="1"/>
</dbReference>
<dbReference type="Gene3D" id="3.40.1160.10">
    <property type="entry name" value="Acetylglutamate kinase-like"/>
    <property type="match status" value="1"/>
</dbReference>
<dbReference type="Gene3D" id="2.30.130.10">
    <property type="entry name" value="PUA domain"/>
    <property type="match status" value="1"/>
</dbReference>
<dbReference type="HAMAP" id="MF_00456">
    <property type="entry name" value="ProB"/>
    <property type="match status" value="1"/>
</dbReference>
<dbReference type="InterPro" id="IPR036393">
    <property type="entry name" value="AceGlu_kinase-like_sf"/>
</dbReference>
<dbReference type="InterPro" id="IPR001048">
    <property type="entry name" value="Asp/Glu/Uridylate_kinase"/>
</dbReference>
<dbReference type="InterPro" id="IPR041739">
    <property type="entry name" value="G5K_ProB"/>
</dbReference>
<dbReference type="InterPro" id="IPR001057">
    <property type="entry name" value="Glu/AcGlu_kinase"/>
</dbReference>
<dbReference type="InterPro" id="IPR011529">
    <property type="entry name" value="Glu_5kinase"/>
</dbReference>
<dbReference type="InterPro" id="IPR005715">
    <property type="entry name" value="Glu_5kinase/COase_Synthase"/>
</dbReference>
<dbReference type="InterPro" id="IPR019797">
    <property type="entry name" value="Glutamate_5-kinase_CS"/>
</dbReference>
<dbReference type="InterPro" id="IPR002478">
    <property type="entry name" value="PUA"/>
</dbReference>
<dbReference type="InterPro" id="IPR015947">
    <property type="entry name" value="PUA-like_sf"/>
</dbReference>
<dbReference type="InterPro" id="IPR036974">
    <property type="entry name" value="PUA_sf"/>
</dbReference>
<dbReference type="NCBIfam" id="TIGR01027">
    <property type="entry name" value="proB"/>
    <property type="match status" value="1"/>
</dbReference>
<dbReference type="PANTHER" id="PTHR43654">
    <property type="entry name" value="GLUTAMATE 5-KINASE"/>
    <property type="match status" value="1"/>
</dbReference>
<dbReference type="PANTHER" id="PTHR43654:SF1">
    <property type="entry name" value="ISOPENTENYL PHOSPHATE KINASE"/>
    <property type="match status" value="1"/>
</dbReference>
<dbReference type="Pfam" id="PF00696">
    <property type="entry name" value="AA_kinase"/>
    <property type="match status" value="1"/>
</dbReference>
<dbReference type="Pfam" id="PF01472">
    <property type="entry name" value="PUA"/>
    <property type="match status" value="1"/>
</dbReference>
<dbReference type="PIRSF" id="PIRSF000729">
    <property type="entry name" value="GK"/>
    <property type="match status" value="1"/>
</dbReference>
<dbReference type="PRINTS" id="PR00474">
    <property type="entry name" value="GLU5KINASE"/>
</dbReference>
<dbReference type="SMART" id="SM00359">
    <property type="entry name" value="PUA"/>
    <property type="match status" value="1"/>
</dbReference>
<dbReference type="SUPFAM" id="SSF53633">
    <property type="entry name" value="Carbamate kinase-like"/>
    <property type="match status" value="1"/>
</dbReference>
<dbReference type="SUPFAM" id="SSF88697">
    <property type="entry name" value="PUA domain-like"/>
    <property type="match status" value="1"/>
</dbReference>
<dbReference type="PROSITE" id="PS00902">
    <property type="entry name" value="GLUTAMATE_5_KINASE"/>
    <property type="match status" value="1"/>
</dbReference>
<dbReference type="PROSITE" id="PS50890">
    <property type="entry name" value="PUA"/>
    <property type="match status" value="1"/>
</dbReference>
<reference key="1">
    <citation type="submission" date="2006-12" db="EMBL/GenBank/DDBJ databases">
        <title>Complete sequence of Shewanella amazonensis SB2B.</title>
        <authorList>
            <consortium name="US DOE Joint Genome Institute"/>
            <person name="Copeland A."/>
            <person name="Lucas S."/>
            <person name="Lapidus A."/>
            <person name="Barry K."/>
            <person name="Detter J.C."/>
            <person name="Glavina del Rio T."/>
            <person name="Hammon N."/>
            <person name="Israni S."/>
            <person name="Dalin E."/>
            <person name="Tice H."/>
            <person name="Pitluck S."/>
            <person name="Munk A.C."/>
            <person name="Brettin T."/>
            <person name="Bruce D."/>
            <person name="Han C."/>
            <person name="Tapia R."/>
            <person name="Gilna P."/>
            <person name="Schmutz J."/>
            <person name="Larimer F."/>
            <person name="Land M."/>
            <person name="Hauser L."/>
            <person name="Kyrpides N."/>
            <person name="Mikhailova N."/>
            <person name="Fredrickson J."/>
            <person name="Richardson P."/>
        </authorList>
    </citation>
    <scope>NUCLEOTIDE SEQUENCE [LARGE SCALE GENOMIC DNA]</scope>
    <source>
        <strain>ATCC BAA-1098 / SB2B</strain>
    </source>
</reference>
<comment type="function">
    <text evidence="1">Catalyzes the transfer of a phosphate group to glutamate to form L-glutamate 5-phosphate.</text>
</comment>
<comment type="catalytic activity">
    <reaction evidence="1">
        <text>L-glutamate + ATP = L-glutamyl 5-phosphate + ADP</text>
        <dbReference type="Rhea" id="RHEA:14877"/>
        <dbReference type="ChEBI" id="CHEBI:29985"/>
        <dbReference type="ChEBI" id="CHEBI:30616"/>
        <dbReference type="ChEBI" id="CHEBI:58274"/>
        <dbReference type="ChEBI" id="CHEBI:456216"/>
        <dbReference type="EC" id="2.7.2.11"/>
    </reaction>
</comment>
<comment type="pathway">
    <text evidence="1">Amino-acid biosynthesis; L-proline biosynthesis; L-glutamate 5-semialdehyde from L-glutamate: step 1/2.</text>
</comment>
<comment type="subcellular location">
    <subcellularLocation>
        <location evidence="1">Cytoplasm</location>
    </subcellularLocation>
</comment>
<comment type="similarity">
    <text evidence="1">Belongs to the glutamate 5-kinase family.</text>
</comment>
<sequence length="379" mass="40563">MNSSVQGYRRVVVKLGTSVLTSGSKSLDKAHMVELARQMAGLMKSGVEVVLVTSGAIAAGREHLGYPVLPDTMANKQLLAAVGQSQLILAWSQLFSIYGLHVGQLLLTRADLHDRERYLNARDTLNALLAQGIVPIINENDAVATTEIKVGDNDNLSARAALLCDADLLMLLTDQKGLFDADPRKEPNARLIPEVEHIDDSLRLLAGGSVSGLGTGGMATKLQAADIARRAGVEVIIASGHHPEVIKKAVHREAVGTRFLAIESPLESRKQWILAGPKAKGRLLLDIGAVAAVTCRGRSLLSKGITGVEGQFERGDTLELVSPDGRVVARGMARYQSQALNLIAGKHSDEIEPLLGYDYGDAVVHRNDMVVLEMIGEAK</sequence>
<organism>
    <name type="scientific">Shewanella amazonensis (strain ATCC BAA-1098 / SB2B)</name>
    <dbReference type="NCBI Taxonomy" id="326297"/>
    <lineage>
        <taxon>Bacteria</taxon>
        <taxon>Pseudomonadati</taxon>
        <taxon>Pseudomonadota</taxon>
        <taxon>Gammaproteobacteria</taxon>
        <taxon>Alteromonadales</taxon>
        <taxon>Shewanellaceae</taxon>
        <taxon>Shewanella</taxon>
    </lineage>
</organism>
<feature type="chain" id="PRO_1000081105" description="Glutamate 5-kinase">
    <location>
        <begin position="1"/>
        <end position="379"/>
    </location>
</feature>
<feature type="domain" description="PUA" evidence="1">
    <location>
        <begin position="280"/>
        <end position="358"/>
    </location>
</feature>
<feature type="binding site" evidence="1">
    <location>
        <position position="14"/>
    </location>
    <ligand>
        <name>ATP</name>
        <dbReference type="ChEBI" id="CHEBI:30616"/>
    </ligand>
</feature>
<feature type="binding site" evidence="1">
    <location>
        <position position="54"/>
    </location>
    <ligand>
        <name>substrate</name>
    </ligand>
</feature>
<feature type="binding site" evidence="1">
    <location>
        <position position="141"/>
    </location>
    <ligand>
        <name>substrate</name>
    </ligand>
</feature>
<feature type="binding site" evidence="1">
    <location>
        <position position="153"/>
    </location>
    <ligand>
        <name>substrate</name>
    </ligand>
</feature>
<feature type="binding site" evidence="1">
    <location>
        <begin position="173"/>
        <end position="174"/>
    </location>
    <ligand>
        <name>ATP</name>
        <dbReference type="ChEBI" id="CHEBI:30616"/>
    </ligand>
</feature>
<feature type="binding site" evidence="1">
    <location>
        <begin position="215"/>
        <end position="221"/>
    </location>
    <ligand>
        <name>ATP</name>
        <dbReference type="ChEBI" id="CHEBI:30616"/>
    </ligand>
</feature>
<protein>
    <recommendedName>
        <fullName evidence="1">Glutamate 5-kinase</fullName>
        <ecNumber evidence="1">2.7.2.11</ecNumber>
    </recommendedName>
    <alternativeName>
        <fullName evidence="1">Gamma-glutamyl kinase</fullName>
        <shortName evidence="1">GK</shortName>
    </alternativeName>
</protein>
<accession>A1S8L2</accession>
<name>PROB_SHEAM</name>
<keyword id="KW-0028">Amino-acid biosynthesis</keyword>
<keyword id="KW-0067">ATP-binding</keyword>
<keyword id="KW-0963">Cytoplasm</keyword>
<keyword id="KW-0418">Kinase</keyword>
<keyword id="KW-0547">Nucleotide-binding</keyword>
<keyword id="KW-0641">Proline biosynthesis</keyword>
<keyword id="KW-1185">Reference proteome</keyword>
<keyword id="KW-0808">Transferase</keyword>